<gene>
    <name evidence="1" type="primary">mptA</name>
    <name type="ordered locus">VNG_1901C</name>
</gene>
<protein>
    <recommendedName>
        <fullName evidence="1">GTP cyclohydrolase MptA</fullName>
        <ecNumber evidence="1">3.5.4.39</ecNumber>
    </recommendedName>
    <alternativeName>
        <fullName evidence="1">GTP cyclohydrolase IV</fullName>
    </alternativeName>
</protein>
<name>MPTA_HALSA</name>
<comment type="function">
    <text evidence="1">Converts GTP to 7,8-dihydro-D-neopterin 2',3'-cyclic phosphate, the first intermediate in the biosynthesis of coenzyme methanopterin.</text>
</comment>
<comment type="catalytic activity">
    <reaction evidence="1">
        <text>GTP + H2O = 7,8-dihydroneopterin 2',3'-cyclic phosphate + formate + diphosphate + H(+)</text>
        <dbReference type="Rhea" id="RHEA:25860"/>
        <dbReference type="ChEBI" id="CHEBI:15377"/>
        <dbReference type="ChEBI" id="CHEBI:15378"/>
        <dbReference type="ChEBI" id="CHEBI:15740"/>
        <dbReference type="ChEBI" id="CHEBI:33019"/>
        <dbReference type="ChEBI" id="CHEBI:37565"/>
        <dbReference type="ChEBI" id="CHEBI:58854"/>
        <dbReference type="EC" id="3.5.4.39"/>
    </reaction>
</comment>
<comment type="cofactor">
    <cofactor evidence="1">
        <name>Fe(2+)</name>
        <dbReference type="ChEBI" id="CHEBI:29033"/>
    </cofactor>
    <text evidence="1">Binds 1 Fe(2+) ion per subunit.</text>
</comment>
<comment type="pathway">
    <text evidence="1">Cofactor biosynthesis; 5,6,7,8-tetrahydromethanopterin biosynthesis.</text>
</comment>
<comment type="subunit">
    <text evidence="1">Homodimer.</text>
</comment>
<comment type="similarity">
    <text evidence="1">Belongs to the GTP cyclohydrolase IV family.</text>
</comment>
<accession>Q9HNX6</accession>
<evidence type="ECO:0000255" key="1">
    <source>
        <dbReference type="HAMAP-Rule" id="MF_01527"/>
    </source>
</evidence>
<sequence>MSQQLPDVQATEPDVSVGLSEVGVTGVEKLVEIAREDDRPIVLMAEFEVYVDLPRGRKGIDMSRNMRVIDETLEDAVREPIYRVEEMCGEVAERLLEKHDYTTTATVEMNAELMLREETPASDLPTQGTIDIIASATAQEDAPTREEIGARVVGMTVCPCSQQMMSETARRKLAELGVGEDAVREFLRDVPQAGHSQRGHATLTVEAGGDPDVNLMDLVSVARDSMSARIYNTAKRPDEDHMTYESHANAKFVEDCVRSMARGVVEEFDHLPEDAVVTMKQSNDESIHQHNAHAERVAEFGQLREEVGSGE</sequence>
<feature type="chain" id="PRO_0000147741" description="GTP cyclohydrolase MptA">
    <location>
        <begin position="1"/>
        <end position="311"/>
    </location>
</feature>
<feature type="site" description="May be catalytically important" evidence="1">
    <location>
        <position position="158"/>
    </location>
</feature>
<proteinExistence type="inferred from homology"/>
<keyword id="KW-0378">Hydrolase</keyword>
<keyword id="KW-0408">Iron</keyword>
<keyword id="KW-0479">Metal-binding</keyword>
<keyword id="KW-1185">Reference proteome</keyword>
<organism>
    <name type="scientific">Halobacterium salinarum (strain ATCC 700922 / JCM 11081 / NRC-1)</name>
    <name type="common">Halobacterium halobium</name>
    <dbReference type="NCBI Taxonomy" id="64091"/>
    <lineage>
        <taxon>Archaea</taxon>
        <taxon>Methanobacteriati</taxon>
        <taxon>Methanobacteriota</taxon>
        <taxon>Stenosarchaea group</taxon>
        <taxon>Halobacteria</taxon>
        <taxon>Halobacteriales</taxon>
        <taxon>Halobacteriaceae</taxon>
        <taxon>Halobacterium</taxon>
        <taxon>Halobacterium salinarum NRC-34001</taxon>
    </lineage>
</organism>
<dbReference type="EC" id="3.5.4.39" evidence="1"/>
<dbReference type="EMBL" id="AE004437">
    <property type="protein sequence ID" value="AAG20094.1"/>
    <property type="molecule type" value="Genomic_DNA"/>
</dbReference>
<dbReference type="PIR" id="B84341">
    <property type="entry name" value="B84341"/>
</dbReference>
<dbReference type="RefSeq" id="WP_010903394.1">
    <property type="nucleotide sequence ID" value="NC_002607.1"/>
</dbReference>
<dbReference type="SMR" id="Q9HNX6"/>
<dbReference type="STRING" id="64091.VNG_1901C"/>
<dbReference type="PaxDb" id="64091-VNG_1901C"/>
<dbReference type="GeneID" id="89350104"/>
<dbReference type="KEGG" id="hal:VNG_1901C"/>
<dbReference type="PATRIC" id="fig|64091.14.peg.1453"/>
<dbReference type="HOGENOM" id="CLU_062816_1_0_2"/>
<dbReference type="InParanoid" id="Q9HNX6"/>
<dbReference type="OrthoDB" id="53087at2157"/>
<dbReference type="PhylomeDB" id="Q9HNX6"/>
<dbReference type="UniPathway" id="UPA00065"/>
<dbReference type="Proteomes" id="UP000000554">
    <property type="component" value="Chromosome"/>
</dbReference>
<dbReference type="GO" id="GO:0003933">
    <property type="term" value="F:GTP cyclohydrolase activity"/>
    <property type="evidence" value="ECO:0000318"/>
    <property type="project" value="GO_Central"/>
</dbReference>
<dbReference type="GO" id="GO:0003934">
    <property type="term" value="F:GTP cyclohydrolase I activity"/>
    <property type="evidence" value="ECO:0007669"/>
    <property type="project" value="InterPro"/>
</dbReference>
<dbReference type="GO" id="GO:0044682">
    <property type="term" value="F:GTP cyclohydrolase IV activity"/>
    <property type="evidence" value="ECO:0007669"/>
    <property type="project" value="UniProtKB-UniRule"/>
</dbReference>
<dbReference type="GO" id="GO:0005506">
    <property type="term" value="F:iron ion binding"/>
    <property type="evidence" value="ECO:0007669"/>
    <property type="project" value="UniProtKB-UniRule"/>
</dbReference>
<dbReference type="GO" id="GO:2001118">
    <property type="term" value="P:tetrahydromethanopterin biosynthetic process"/>
    <property type="evidence" value="ECO:0007669"/>
    <property type="project" value="UniProtKB-UniRule"/>
</dbReference>
<dbReference type="Gene3D" id="3.10.270.10">
    <property type="entry name" value="Urate Oxidase"/>
    <property type="match status" value="1"/>
</dbReference>
<dbReference type="HAMAP" id="MF_01527_A">
    <property type="entry name" value="GTP_cyclohydrol_A"/>
    <property type="match status" value="1"/>
</dbReference>
<dbReference type="InterPro" id="IPR003801">
    <property type="entry name" value="GTP_cyclohydrolase_FolE2/MptA"/>
</dbReference>
<dbReference type="InterPro" id="IPR022840">
    <property type="entry name" value="GTP_cyclohydrolase_MptA"/>
</dbReference>
<dbReference type="NCBIfam" id="TIGR00294">
    <property type="entry name" value="GTP cyclohydrolase MptA"/>
    <property type="match status" value="1"/>
</dbReference>
<dbReference type="PANTHER" id="PTHR36445">
    <property type="entry name" value="GTP CYCLOHYDROLASE MPTA"/>
    <property type="match status" value="1"/>
</dbReference>
<dbReference type="PANTHER" id="PTHR36445:SF1">
    <property type="entry name" value="GTP CYCLOHYDROLASE MPTA"/>
    <property type="match status" value="1"/>
</dbReference>
<dbReference type="Pfam" id="PF02649">
    <property type="entry name" value="GCHY-1"/>
    <property type="match status" value="1"/>
</dbReference>
<reference key="1">
    <citation type="journal article" date="2000" name="Proc. Natl. Acad. Sci. U.S.A.">
        <title>Genome sequence of Halobacterium species NRC-1.</title>
        <authorList>
            <person name="Ng W.V."/>
            <person name="Kennedy S.P."/>
            <person name="Mahairas G.G."/>
            <person name="Berquist B."/>
            <person name="Pan M."/>
            <person name="Shukla H.D."/>
            <person name="Lasky S.R."/>
            <person name="Baliga N.S."/>
            <person name="Thorsson V."/>
            <person name="Sbrogna J."/>
            <person name="Swartzell S."/>
            <person name="Weir D."/>
            <person name="Hall J."/>
            <person name="Dahl T.A."/>
            <person name="Welti R."/>
            <person name="Goo Y.A."/>
            <person name="Leithauser B."/>
            <person name="Keller K."/>
            <person name="Cruz R."/>
            <person name="Danson M.J."/>
            <person name="Hough D.W."/>
            <person name="Maddocks D.G."/>
            <person name="Jablonski P.E."/>
            <person name="Krebs M.P."/>
            <person name="Angevine C.M."/>
            <person name="Dale H."/>
            <person name="Isenbarger T.A."/>
            <person name="Peck R.F."/>
            <person name="Pohlschroder M."/>
            <person name="Spudich J.L."/>
            <person name="Jung K.-H."/>
            <person name="Alam M."/>
            <person name="Freitas T."/>
            <person name="Hou S."/>
            <person name="Daniels C.J."/>
            <person name="Dennis P.P."/>
            <person name="Omer A.D."/>
            <person name="Ebhardt H."/>
            <person name="Lowe T.M."/>
            <person name="Liang P."/>
            <person name="Riley M."/>
            <person name="Hood L."/>
            <person name="DasSarma S."/>
        </authorList>
    </citation>
    <scope>NUCLEOTIDE SEQUENCE [LARGE SCALE GENOMIC DNA]</scope>
    <source>
        <strain>ATCC 700922 / JCM 11081 / NRC-1</strain>
    </source>
</reference>